<protein>
    <recommendedName>
        <fullName>Keratin, type II microfibrillar</fullName>
    </recommendedName>
    <alternativeName>
        <fullName>Low-sulfur keratin</fullName>
    </alternativeName>
</protein>
<evidence type="ECO:0000255" key="1">
    <source>
        <dbReference type="PROSITE-ProRule" id="PRU01188"/>
    </source>
</evidence>
<feature type="chain" id="PRO_0000063747" description="Keratin, type II microfibrillar">
    <location>
        <begin position="1" status="less than"/>
        <end position="109" status="greater than"/>
    </location>
</feature>
<feature type="domain" description="IF rod" evidence="1">
    <location>
        <begin position="1" status="less than"/>
        <end position="109" status="greater than"/>
    </location>
</feature>
<feature type="region of interest" description="Linker 1">
    <location>
        <begin position="1"/>
        <end position="10"/>
    </location>
</feature>
<feature type="region of interest" description="Coil 1B">
    <location>
        <begin position="11"/>
        <end position="109" status="greater than"/>
    </location>
</feature>
<feature type="sequence variant">
    <original>R</original>
    <variation>K</variation>
    <location>
        <position position="51"/>
    </location>
</feature>
<feature type="sequence variant">
    <original>R</original>
    <variation>K</variation>
    <location>
        <position position="52"/>
    </location>
</feature>
<feature type="non-terminal residue">
    <location>
        <position position="1"/>
    </location>
</feature>
<feature type="non-terminal residue">
    <location>
        <position position="109"/>
    </location>
</feature>
<proteinExistence type="evidence at protein level"/>
<reference key="1">
    <citation type="journal article" date="1978" name="Biochem. J.">
        <title>Amino acid sequences of alpha-helical segments from S-carboxymethylkerateine-A. Complete sequence of a type-II segment.</title>
        <authorList>
            <person name="Crewther W.G."/>
            <person name="Inglis A.S."/>
            <person name="McKern N.M."/>
        </authorList>
    </citation>
    <scope>PROTEIN SEQUENCE</scope>
</reference>
<sequence length="109" mass="12683">QNRQCCESNLEPLFSGYIETLRREAECAEADSGRLSSELNSLQEVLEGYKRRYEEEVALRATAENEFVALKKDVDCAYLRKSDLEANVEALIQETDFLRRLYEEEIRVL</sequence>
<organism>
    <name type="scientific">Ovis aries</name>
    <name type="common">Sheep</name>
    <dbReference type="NCBI Taxonomy" id="9940"/>
    <lineage>
        <taxon>Eukaryota</taxon>
        <taxon>Metazoa</taxon>
        <taxon>Chordata</taxon>
        <taxon>Craniata</taxon>
        <taxon>Vertebrata</taxon>
        <taxon>Euteleostomi</taxon>
        <taxon>Mammalia</taxon>
        <taxon>Eutheria</taxon>
        <taxon>Laurasiatheria</taxon>
        <taxon>Artiodactyla</taxon>
        <taxon>Ruminantia</taxon>
        <taxon>Pecora</taxon>
        <taxon>Bovidae</taxon>
        <taxon>Caprinae</taxon>
        <taxon>Ovis</taxon>
    </lineage>
</organism>
<comment type="function">
    <text>Wool microfibrillar keratin.</text>
</comment>
<comment type="miscellaneous">
    <text>There are two types of cytoskeletal and microfibrillar keratin: I (acidic; 40-55 kDa) and II (neutral to basic; 56-70 kDa).</text>
</comment>
<comment type="similarity">
    <text evidence="1">Belongs to the intermediate filament family.</text>
</comment>
<accession>P02539</accession>
<keyword id="KW-0175">Coiled coil</keyword>
<keyword id="KW-0903">Direct protein sequencing</keyword>
<keyword id="KW-0403">Intermediate filament</keyword>
<keyword id="KW-0416">Keratin</keyword>
<keyword id="KW-1185">Reference proteome</keyword>
<dbReference type="SMR" id="P02539"/>
<dbReference type="PaxDb" id="9940-ENSOARP00000018386"/>
<dbReference type="eggNOG" id="ENOG502RTZU">
    <property type="taxonomic scope" value="Eukaryota"/>
</dbReference>
<dbReference type="Proteomes" id="UP000002356">
    <property type="component" value="Unplaced"/>
</dbReference>
<dbReference type="GO" id="GO:0005615">
    <property type="term" value="C:extracellular space"/>
    <property type="evidence" value="ECO:0007669"/>
    <property type="project" value="TreeGrafter"/>
</dbReference>
<dbReference type="GO" id="GO:0045095">
    <property type="term" value="C:keratin filament"/>
    <property type="evidence" value="ECO:0007669"/>
    <property type="project" value="InterPro"/>
</dbReference>
<dbReference type="GO" id="GO:0030280">
    <property type="term" value="F:structural constituent of skin epidermis"/>
    <property type="evidence" value="ECO:0007669"/>
    <property type="project" value="TreeGrafter"/>
</dbReference>
<dbReference type="GO" id="GO:0045109">
    <property type="term" value="P:intermediate filament organization"/>
    <property type="evidence" value="ECO:0007669"/>
    <property type="project" value="TreeGrafter"/>
</dbReference>
<dbReference type="GO" id="GO:0031424">
    <property type="term" value="P:keratinization"/>
    <property type="evidence" value="ECO:0007669"/>
    <property type="project" value="TreeGrafter"/>
</dbReference>
<dbReference type="FunFam" id="1.20.5.1160:FF:000001">
    <property type="entry name" value="Keratin type II"/>
    <property type="match status" value="1"/>
</dbReference>
<dbReference type="Gene3D" id="1.20.5.1160">
    <property type="entry name" value="Vasodilator-stimulated phosphoprotein"/>
    <property type="match status" value="1"/>
</dbReference>
<dbReference type="InterPro" id="IPR039008">
    <property type="entry name" value="IF_rod_dom"/>
</dbReference>
<dbReference type="InterPro" id="IPR003054">
    <property type="entry name" value="Keratin_II"/>
</dbReference>
<dbReference type="PANTHER" id="PTHR45616">
    <property type="entry name" value="GATA-TYPE DOMAIN-CONTAINING PROTEIN"/>
    <property type="match status" value="1"/>
</dbReference>
<dbReference type="PANTHER" id="PTHR45616:SF52">
    <property type="entry name" value="KERATIN, TYPE II CUTICULAR HB3"/>
    <property type="match status" value="1"/>
</dbReference>
<dbReference type="Pfam" id="PF00038">
    <property type="entry name" value="Filament"/>
    <property type="match status" value="1"/>
</dbReference>
<dbReference type="PRINTS" id="PR01276">
    <property type="entry name" value="TYPE2KERATIN"/>
</dbReference>
<dbReference type="SUPFAM" id="SSF64593">
    <property type="entry name" value="Intermediate filament protein, coiled coil region"/>
    <property type="match status" value="1"/>
</dbReference>
<dbReference type="PROSITE" id="PS51842">
    <property type="entry name" value="IF_ROD_2"/>
    <property type="match status" value="1"/>
</dbReference>
<name>K2M1_SHEEP</name>